<reference key="1">
    <citation type="journal article" date="1993" name="Mol. Microbiol.">
        <title>Bacillus subtilis genome project: cloning and sequencing of the 97 kb region from 325 degrees to 333 degrees.</title>
        <authorList>
            <person name="Glaser P."/>
            <person name="Kunst F."/>
            <person name="Arnaud M."/>
            <person name="Coudart M.P."/>
            <person name="Gonzales W."/>
            <person name="Hullo M.-F."/>
            <person name="Ionescu M."/>
            <person name="Lubochinsky B."/>
            <person name="Marcelino L."/>
            <person name="Moszer I."/>
            <person name="Presecan E."/>
            <person name="Santana M."/>
            <person name="Schneider E."/>
            <person name="Schweizer J."/>
            <person name="Vertes A."/>
            <person name="Rapoport G."/>
            <person name="Danchin A."/>
        </authorList>
    </citation>
    <scope>NUCLEOTIDE SEQUENCE [GENOMIC DNA]</scope>
    <source>
        <strain>168</strain>
    </source>
</reference>
<reference key="2">
    <citation type="journal article" date="1997" name="Nature">
        <title>The complete genome sequence of the Gram-positive bacterium Bacillus subtilis.</title>
        <authorList>
            <person name="Kunst F."/>
            <person name="Ogasawara N."/>
            <person name="Moszer I."/>
            <person name="Albertini A.M."/>
            <person name="Alloni G."/>
            <person name="Azevedo V."/>
            <person name="Bertero M.G."/>
            <person name="Bessieres P."/>
            <person name="Bolotin A."/>
            <person name="Borchert S."/>
            <person name="Borriss R."/>
            <person name="Boursier L."/>
            <person name="Brans A."/>
            <person name="Braun M."/>
            <person name="Brignell S.C."/>
            <person name="Bron S."/>
            <person name="Brouillet S."/>
            <person name="Bruschi C.V."/>
            <person name="Caldwell B."/>
            <person name="Capuano V."/>
            <person name="Carter N.M."/>
            <person name="Choi S.-K."/>
            <person name="Codani J.-J."/>
            <person name="Connerton I.F."/>
            <person name="Cummings N.J."/>
            <person name="Daniel R.A."/>
            <person name="Denizot F."/>
            <person name="Devine K.M."/>
            <person name="Duesterhoeft A."/>
            <person name="Ehrlich S.D."/>
            <person name="Emmerson P.T."/>
            <person name="Entian K.-D."/>
            <person name="Errington J."/>
            <person name="Fabret C."/>
            <person name="Ferrari E."/>
            <person name="Foulger D."/>
            <person name="Fritz C."/>
            <person name="Fujita M."/>
            <person name="Fujita Y."/>
            <person name="Fuma S."/>
            <person name="Galizzi A."/>
            <person name="Galleron N."/>
            <person name="Ghim S.-Y."/>
            <person name="Glaser P."/>
            <person name="Goffeau A."/>
            <person name="Golightly E.J."/>
            <person name="Grandi G."/>
            <person name="Guiseppi G."/>
            <person name="Guy B.J."/>
            <person name="Haga K."/>
            <person name="Haiech J."/>
            <person name="Harwood C.R."/>
            <person name="Henaut A."/>
            <person name="Hilbert H."/>
            <person name="Holsappel S."/>
            <person name="Hosono S."/>
            <person name="Hullo M.-F."/>
            <person name="Itaya M."/>
            <person name="Jones L.-M."/>
            <person name="Joris B."/>
            <person name="Karamata D."/>
            <person name="Kasahara Y."/>
            <person name="Klaerr-Blanchard M."/>
            <person name="Klein C."/>
            <person name="Kobayashi Y."/>
            <person name="Koetter P."/>
            <person name="Koningstein G."/>
            <person name="Krogh S."/>
            <person name="Kumano M."/>
            <person name="Kurita K."/>
            <person name="Lapidus A."/>
            <person name="Lardinois S."/>
            <person name="Lauber J."/>
            <person name="Lazarevic V."/>
            <person name="Lee S.-M."/>
            <person name="Levine A."/>
            <person name="Liu H."/>
            <person name="Masuda S."/>
            <person name="Mauel C."/>
            <person name="Medigue C."/>
            <person name="Medina N."/>
            <person name="Mellado R.P."/>
            <person name="Mizuno M."/>
            <person name="Moestl D."/>
            <person name="Nakai S."/>
            <person name="Noback M."/>
            <person name="Noone D."/>
            <person name="O'Reilly M."/>
            <person name="Ogawa K."/>
            <person name="Ogiwara A."/>
            <person name="Oudega B."/>
            <person name="Park S.-H."/>
            <person name="Parro V."/>
            <person name="Pohl T.M."/>
            <person name="Portetelle D."/>
            <person name="Porwollik S."/>
            <person name="Prescott A.M."/>
            <person name="Presecan E."/>
            <person name="Pujic P."/>
            <person name="Purnelle B."/>
            <person name="Rapoport G."/>
            <person name="Rey M."/>
            <person name="Reynolds S."/>
            <person name="Rieger M."/>
            <person name="Rivolta C."/>
            <person name="Rocha E."/>
            <person name="Roche B."/>
            <person name="Rose M."/>
            <person name="Sadaie Y."/>
            <person name="Sato T."/>
            <person name="Scanlan E."/>
            <person name="Schleich S."/>
            <person name="Schroeter R."/>
            <person name="Scoffone F."/>
            <person name="Sekiguchi J."/>
            <person name="Sekowska A."/>
            <person name="Seror S.J."/>
            <person name="Serror P."/>
            <person name="Shin B.-S."/>
            <person name="Soldo B."/>
            <person name="Sorokin A."/>
            <person name="Tacconi E."/>
            <person name="Takagi T."/>
            <person name="Takahashi H."/>
            <person name="Takemaru K."/>
            <person name="Takeuchi M."/>
            <person name="Tamakoshi A."/>
            <person name="Tanaka T."/>
            <person name="Terpstra P."/>
            <person name="Tognoni A."/>
            <person name="Tosato V."/>
            <person name="Uchiyama S."/>
            <person name="Vandenbol M."/>
            <person name="Vannier F."/>
            <person name="Vassarotti A."/>
            <person name="Viari A."/>
            <person name="Wambutt R."/>
            <person name="Wedler E."/>
            <person name="Wedler H."/>
            <person name="Weitzenegger T."/>
            <person name="Winters P."/>
            <person name="Wipat A."/>
            <person name="Yamamoto H."/>
            <person name="Yamane K."/>
            <person name="Yasumoto K."/>
            <person name="Yata K."/>
            <person name="Yoshida K."/>
            <person name="Yoshikawa H.-F."/>
            <person name="Zumstein E."/>
            <person name="Yoshikawa H."/>
            <person name="Danchin A."/>
        </authorList>
    </citation>
    <scope>NUCLEOTIDE SEQUENCE [LARGE SCALE GENOMIC DNA]</scope>
    <source>
        <strain>168</strain>
    </source>
</reference>
<reference key="3">
    <citation type="journal article" date="1991" name="DNA Seq.">
        <title>A gene encoding a tyrosine tRNA synthetase is located near sacS in Bacillus subtilis.</title>
        <authorList>
            <person name="Glaser P."/>
            <person name="Kunst F."/>
            <person name="Debarbouille M."/>
            <person name="Vertes A."/>
            <person name="Danchin A."/>
            <person name="Dedonder R."/>
        </authorList>
    </citation>
    <scope>NUCLEOTIDE SEQUENCE [GENOMIC DNA] OF 1-68</scope>
    <source>
        <strain>168</strain>
    </source>
</reference>
<reference key="4">
    <citation type="journal article" date="2004" name="Acta Crystallogr. D">
        <title>Preliminary crystallographic characterization of BSAP, an extracellular aminopeptidase from Bacillus subtilis.</title>
        <authorList>
            <person name="Reiland V."/>
            <person name="Fundoiano-Hershcovitz Y."/>
            <person name="Golan G."/>
            <person name="Gilboa R."/>
            <person name="Shoham Y."/>
            <person name="Shoham G."/>
        </authorList>
    </citation>
    <scope>CRYSTALLIZATION</scope>
    <scope>SUBUNIT</scope>
</reference>
<reference key="5">
    <citation type="journal article" date="2005" name="FEMS Microbiol. Lett.">
        <title>The ywad gene from Bacillus subtilis encodes a double-zinc aminopeptidase.</title>
        <authorList>
            <person name="Fundoiano-Hershcovitz Y."/>
            <person name="Rabinovitch L."/>
            <person name="Shulami S."/>
            <person name="Reiland V."/>
            <person name="Shoham G."/>
            <person name="Shoham Y."/>
        </authorList>
    </citation>
    <scope>CATALYTIC ACTIVITY</scope>
    <scope>FUNCTION</scope>
    <scope>COFACTOR</scope>
    <scope>BIOPHYSICOCHEMICAL PROPERTIES</scope>
    <source>
        <strain>168 / BR151</strain>
    </source>
</reference>
<sequence>MKKLLTVMTMAVLTAGTLLLPAQSVTPAAHAVQISNSERELPFKAKHAYSTISQLSEAIGPRIAGTAAEKKSALLIASSMRKLKLDVKVQRFNIPDRLEGTLSSAGRDILLQAASGSAPTEEQGLTAPLYNAGLGYQKDFTADAKGKIALISRGDLTYYEKAKNAEAAGAKAVIIYNNKESLVPMTPNLSGNKVGIPVVGIKKEDGEALTQQKEATLKLKAFTNQTSQNIIGIKKPKNIKHPDIVYVTAHYDSVPFSPGANDNGSGTSVMLEMARVLKSVPSDKEIRFIAFGAEELGLLGSSHYVDHLSEKELKRSEVNFNLDMVGTSWEKASELYVNTLDGQSNYVWESSRTAAEKIGFDSLSLTQGGSSDHVPFHEAGIDSANFIWGDPETEEVEPWYHTPEDSIEHISKERLQQAGDLVTAAVYEAVKKEKKPKTIKKQMKAKASDIFEDIK</sequence>
<feature type="signal peptide" evidence="2">
    <location>
        <begin position="1"/>
        <end position="31"/>
    </location>
</feature>
<feature type="chain" id="PRO_0000026854" description="Aminopeptidase YwaD">
    <location>
        <begin position="32"/>
        <end position="455"/>
    </location>
</feature>
<feature type="binding site" evidence="1">
    <location>
        <position position="250"/>
    </location>
    <ligand>
        <name>Zn(2+)</name>
        <dbReference type="ChEBI" id="CHEBI:29105"/>
        <label>1</label>
    </ligand>
</feature>
<feature type="binding site" evidence="1">
    <location>
        <position position="262"/>
    </location>
    <ligand>
        <name>Zn(2+)</name>
        <dbReference type="ChEBI" id="CHEBI:29105"/>
        <label>1</label>
    </ligand>
</feature>
<feature type="binding site" evidence="1">
    <location>
        <position position="262"/>
    </location>
    <ligand>
        <name>Zn(2+)</name>
        <dbReference type="ChEBI" id="CHEBI:29105"/>
        <label>2</label>
        <note>catalytic</note>
    </ligand>
</feature>
<feature type="binding site" evidence="1">
    <location>
        <position position="295"/>
    </location>
    <ligand>
        <name>Zn(2+)</name>
        <dbReference type="ChEBI" id="CHEBI:29105"/>
        <label>2</label>
        <note>catalytic</note>
    </ligand>
</feature>
<feature type="binding site" evidence="1">
    <location>
        <position position="323"/>
    </location>
    <ligand>
        <name>Zn(2+)</name>
        <dbReference type="ChEBI" id="CHEBI:29105"/>
        <label>1</label>
    </ligand>
</feature>
<feature type="binding site" evidence="1">
    <location>
        <position position="401"/>
    </location>
    <ligand>
        <name>Zn(2+)</name>
        <dbReference type="ChEBI" id="CHEBI:29105"/>
        <label>2</label>
        <note>catalytic</note>
    </ligand>
</feature>
<feature type="helix" evidence="6">
    <location>
        <begin position="45"/>
        <end position="56"/>
    </location>
</feature>
<feature type="turn" evidence="6">
    <location>
        <begin position="57"/>
        <end position="59"/>
    </location>
</feature>
<feature type="helix" evidence="6">
    <location>
        <begin position="67"/>
        <end position="82"/>
    </location>
</feature>
<feature type="strand" evidence="6">
    <location>
        <begin position="86"/>
        <end position="93"/>
    </location>
</feature>
<feature type="strand" evidence="6">
    <location>
        <begin position="97"/>
        <end position="104"/>
    </location>
</feature>
<feature type="strand" evidence="6">
    <location>
        <begin position="107"/>
        <end position="109"/>
    </location>
</feature>
<feature type="strand" evidence="6">
    <location>
        <begin position="111"/>
        <end position="113"/>
    </location>
</feature>
<feature type="strand" evidence="6">
    <location>
        <begin position="125"/>
        <end position="131"/>
    </location>
</feature>
<feature type="helix" evidence="6">
    <location>
        <begin position="137"/>
        <end position="139"/>
    </location>
</feature>
<feature type="helix" evidence="6">
    <location>
        <begin position="142"/>
        <end position="144"/>
    </location>
</feature>
<feature type="strand" evidence="6">
    <location>
        <begin position="147"/>
        <end position="152"/>
    </location>
</feature>
<feature type="strand" evidence="6">
    <location>
        <begin position="154"/>
        <end position="156"/>
    </location>
</feature>
<feature type="helix" evidence="6">
    <location>
        <begin position="158"/>
        <end position="167"/>
    </location>
</feature>
<feature type="strand" evidence="6">
    <location>
        <begin position="171"/>
        <end position="176"/>
    </location>
</feature>
<feature type="strand" evidence="6">
    <location>
        <begin position="198"/>
        <end position="201"/>
    </location>
</feature>
<feature type="helix" evidence="6">
    <location>
        <begin position="203"/>
        <end position="209"/>
    </location>
</feature>
<feature type="strand" evidence="6">
    <location>
        <begin position="213"/>
        <end position="222"/>
    </location>
</feature>
<feature type="strand" evidence="6">
    <location>
        <begin position="226"/>
        <end position="234"/>
    </location>
</feature>
<feature type="strand" evidence="6">
    <location>
        <begin position="244"/>
        <end position="250"/>
    </location>
</feature>
<feature type="turn" evidence="6">
    <location>
        <begin position="260"/>
        <end position="263"/>
    </location>
</feature>
<feature type="helix" evidence="6">
    <location>
        <begin position="264"/>
        <end position="277"/>
    </location>
</feature>
<feature type="strand" evidence="6">
    <location>
        <begin position="283"/>
        <end position="292"/>
    </location>
</feature>
<feature type="helix" evidence="6">
    <location>
        <begin position="294"/>
        <end position="296"/>
    </location>
</feature>
<feature type="helix" evidence="6">
    <location>
        <begin position="299"/>
        <end position="306"/>
    </location>
</feature>
<feature type="helix" evidence="6">
    <location>
        <begin position="310"/>
        <end position="315"/>
    </location>
</feature>
<feature type="strand" evidence="6">
    <location>
        <begin position="316"/>
        <end position="322"/>
    </location>
</feature>
<feature type="strand" evidence="6">
    <location>
        <begin position="334"/>
        <end position="339"/>
    </location>
</feature>
<feature type="helix" evidence="6">
    <location>
        <begin position="346"/>
        <end position="358"/>
    </location>
</feature>
<feature type="strand" evidence="6">
    <location>
        <begin position="363"/>
        <end position="367"/>
    </location>
</feature>
<feature type="helix" evidence="6">
    <location>
        <begin position="373"/>
        <end position="378"/>
    </location>
</feature>
<feature type="strand" evidence="6">
    <location>
        <begin position="382"/>
        <end position="389"/>
    </location>
</feature>
<feature type="turn" evidence="6">
    <location>
        <begin position="391"/>
        <end position="393"/>
    </location>
</feature>
<feature type="turn" evidence="6">
    <location>
        <begin position="398"/>
        <end position="401"/>
    </location>
</feature>
<feature type="helix" evidence="6">
    <location>
        <begin position="407"/>
        <end position="409"/>
    </location>
</feature>
<feature type="helix" evidence="6">
    <location>
        <begin position="412"/>
        <end position="430"/>
    </location>
</feature>
<feature type="helix" evidence="6">
    <location>
        <begin position="447"/>
        <end position="449"/>
    </location>
</feature>
<protein>
    <recommendedName>
        <fullName>Aminopeptidase YwaD</fullName>
    </recommendedName>
    <alternativeName>
        <fullName>Arginyl aminopeptidase</fullName>
        <ecNumber>3.4.11.6</ecNumber>
    </alternativeName>
    <alternativeName>
        <fullName>BSAP</fullName>
    </alternativeName>
    <alternativeName>
        <fullName>Leucyl aminopeptidase</fullName>
        <ecNumber>3.4.11.10</ecNumber>
    </alternativeName>
</protein>
<organism>
    <name type="scientific">Bacillus subtilis (strain 168)</name>
    <dbReference type="NCBI Taxonomy" id="224308"/>
    <lineage>
        <taxon>Bacteria</taxon>
        <taxon>Bacillati</taxon>
        <taxon>Bacillota</taxon>
        <taxon>Bacilli</taxon>
        <taxon>Bacillales</taxon>
        <taxon>Bacillaceae</taxon>
        <taxon>Bacillus</taxon>
    </lineage>
</organism>
<name>BSAP_BACSU</name>
<comment type="function">
    <text evidence="4">Catalyzes the hydrolysis of a range of N-terminal amino acids.</text>
</comment>
<comment type="catalytic activity">
    <reaction evidence="4">
        <text>Release of N-terminal Arg and Lys from oligopeptides when P1' is not Pro. Also acts on arylamides of Arg and Lys.</text>
        <dbReference type="EC" id="3.4.11.6"/>
    </reaction>
</comment>
<comment type="catalytic activity">
    <reaction evidence="4">
        <text>Release of an N-terminal amino acid, preferentially leucine, but not glutamic or aspartic acids.</text>
        <dbReference type="EC" id="3.4.11.10"/>
    </reaction>
</comment>
<comment type="cofactor">
    <cofactor evidence="4">
        <name>Zn(2+)</name>
        <dbReference type="ChEBI" id="CHEBI:29105"/>
    </cofactor>
    <text evidence="4">Binds 2 Zn(2+) ions per subunit.</text>
</comment>
<comment type="biophysicochemical properties">
    <kinetics>
        <KM evidence="4">0.6 mM for Arg-pNA</KM>
        <KM evidence="4">0.85 mM for Lys-pNA</KM>
        <KM evidence="4">3.6 mM for Leu-pNA</KM>
        <KM evidence="4">19 mM for Val-pNA</KM>
        <KM evidence="4">10 mM for Ala-pNA</KM>
    </kinetics>
    <phDependence>
        <text evidence="4">Optimum pH is 8-9.</text>
    </phDependence>
    <temperatureDependence>
        <text evidence="4">Stable for 20 minutes at temperatures of up to 80 degrees Celsius.</text>
    </temperatureDependence>
</comment>
<comment type="subunit">
    <text evidence="3">Monomer.</text>
</comment>
<comment type="subcellular location">
    <subcellularLocation>
        <location evidence="5">Secreted</location>
    </subcellularLocation>
</comment>
<comment type="similarity">
    <text evidence="5">Belongs to the peptidase M28 family. M28B subfamily.</text>
</comment>
<accession>P25152</accession>
<proteinExistence type="evidence at protein level"/>
<evidence type="ECO:0000250" key="1"/>
<evidence type="ECO:0000255" key="2"/>
<evidence type="ECO:0000269" key="3">
    <source>
    </source>
</evidence>
<evidence type="ECO:0000269" key="4">
    <source>
    </source>
</evidence>
<evidence type="ECO:0000305" key="5"/>
<evidence type="ECO:0007829" key="6">
    <source>
        <dbReference type="PDB" id="6HC6"/>
    </source>
</evidence>
<dbReference type="EC" id="3.4.11.6"/>
<dbReference type="EC" id="3.4.11.10"/>
<dbReference type="EMBL" id="X73124">
    <property type="protein sequence ID" value="CAA51564.1"/>
    <property type="molecule type" value="Genomic_DNA"/>
</dbReference>
<dbReference type="EMBL" id="AL009126">
    <property type="protein sequence ID" value="CAB15873.1"/>
    <property type="molecule type" value="Genomic_DNA"/>
</dbReference>
<dbReference type="EMBL" id="X52480">
    <property type="protein sequence ID" value="CAA36725.1"/>
    <property type="molecule type" value="Genomic_DNA"/>
</dbReference>
<dbReference type="PIR" id="S39663">
    <property type="entry name" value="S39663"/>
</dbReference>
<dbReference type="RefSeq" id="WP_003242515.1">
    <property type="nucleotide sequence ID" value="NZ_OZ025638.1"/>
</dbReference>
<dbReference type="PDB" id="6HC6">
    <property type="method" value="X-ray"/>
    <property type="resolution" value="1.77 A"/>
    <property type="chains" value="A/B/C=1-455"/>
</dbReference>
<dbReference type="PDB" id="6HC7">
    <property type="method" value="X-ray"/>
    <property type="resolution" value="2.50 A"/>
    <property type="chains" value="A/B/C=1-455"/>
</dbReference>
<dbReference type="PDBsum" id="6HC6"/>
<dbReference type="PDBsum" id="6HC7"/>
<dbReference type="SMR" id="P25152"/>
<dbReference type="FunCoup" id="P25152">
    <property type="interactions" value="42"/>
</dbReference>
<dbReference type="STRING" id="224308.BSU38470"/>
<dbReference type="MEROPS" id="M28.009"/>
<dbReference type="PaxDb" id="224308-BSU38470"/>
<dbReference type="DNASU" id="937350"/>
<dbReference type="EnsemblBacteria" id="CAB15873">
    <property type="protein sequence ID" value="CAB15873"/>
    <property type="gene ID" value="BSU_38470"/>
</dbReference>
<dbReference type="GeneID" id="937350"/>
<dbReference type="KEGG" id="bsu:BSU38470"/>
<dbReference type="PATRIC" id="fig|224308.179.peg.4164"/>
<dbReference type="eggNOG" id="COG2234">
    <property type="taxonomic scope" value="Bacteria"/>
</dbReference>
<dbReference type="InParanoid" id="P25152"/>
<dbReference type="OrthoDB" id="9762302at2"/>
<dbReference type="BioCyc" id="BSUB:BSU38470-MONOMER"/>
<dbReference type="BRENDA" id="3.4.11.10">
    <property type="organism ID" value="658"/>
</dbReference>
<dbReference type="BRENDA" id="3.4.11.6">
    <property type="organism ID" value="658"/>
</dbReference>
<dbReference type="SABIO-RK" id="P25152"/>
<dbReference type="Proteomes" id="UP000001570">
    <property type="component" value="Chromosome"/>
</dbReference>
<dbReference type="GO" id="GO:0005576">
    <property type="term" value="C:extracellular region"/>
    <property type="evidence" value="ECO:0007669"/>
    <property type="project" value="UniProtKB-SubCell"/>
</dbReference>
<dbReference type="GO" id="GO:0004177">
    <property type="term" value="F:aminopeptidase activity"/>
    <property type="evidence" value="ECO:0007669"/>
    <property type="project" value="UniProtKB-KW"/>
</dbReference>
<dbReference type="GO" id="GO:0046872">
    <property type="term" value="F:metal ion binding"/>
    <property type="evidence" value="ECO:0007669"/>
    <property type="project" value="UniProtKB-KW"/>
</dbReference>
<dbReference type="GO" id="GO:0008235">
    <property type="term" value="F:metalloexopeptidase activity"/>
    <property type="evidence" value="ECO:0007669"/>
    <property type="project" value="InterPro"/>
</dbReference>
<dbReference type="GO" id="GO:0006508">
    <property type="term" value="P:proteolysis"/>
    <property type="evidence" value="ECO:0000318"/>
    <property type="project" value="GO_Central"/>
</dbReference>
<dbReference type="CDD" id="cd05661">
    <property type="entry name" value="M28_like_PA"/>
    <property type="match status" value="1"/>
</dbReference>
<dbReference type="CDD" id="cd02133">
    <property type="entry name" value="PA_C5a_like"/>
    <property type="match status" value="1"/>
</dbReference>
<dbReference type="Gene3D" id="3.50.30.30">
    <property type="match status" value="1"/>
</dbReference>
<dbReference type="Gene3D" id="3.40.630.10">
    <property type="entry name" value="Zn peptidases"/>
    <property type="match status" value="1"/>
</dbReference>
<dbReference type="InterPro" id="IPR045175">
    <property type="entry name" value="M28_fam"/>
</dbReference>
<dbReference type="InterPro" id="IPR046450">
    <property type="entry name" value="PA_dom_sf"/>
</dbReference>
<dbReference type="InterPro" id="IPR003137">
    <property type="entry name" value="PA_domain"/>
</dbReference>
<dbReference type="InterPro" id="IPR007484">
    <property type="entry name" value="Peptidase_M28"/>
</dbReference>
<dbReference type="PANTHER" id="PTHR12147">
    <property type="entry name" value="METALLOPEPTIDASE M28 FAMILY MEMBER"/>
    <property type="match status" value="1"/>
</dbReference>
<dbReference type="PANTHER" id="PTHR12147:SF26">
    <property type="entry name" value="PEPTIDASE M28 DOMAIN-CONTAINING PROTEIN"/>
    <property type="match status" value="1"/>
</dbReference>
<dbReference type="Pfam" id="PF02225">
    <property type="entry name" value="PA"/>
    <property type="match status" value="1"/>
</dbReference>
<dbReference type="Pfam" id="PF04389">
    <property type="entry name" value="Peptidase_M28"/>
    <property type="match status" value="1"/>
</dbReference>
<dbReference type="SUPFAM" id="SSF52025">
    <property type="entry name" value="PA domain"/>
    <property type="match status" value="1"/>
</dbReference>
<dbReference type="SUPFAM" id="SSF53187">
    <property type="entry name" value="Zn-dependent exopeptidases"/>
    <property type="match status" value="1"/>
</dbReference>
<gene>
    <name type="primary">ywaD</name>
    <name type="ordered locus">BSU38470</name>
    <name type="ORF">ipa-8r</name>
</gene>
<keyword id="KW-0002">3D-structure</keyword>
<keyword id="KW-0031">Aminopeptidase</keyword>
<keyword id="KW-0378">Hydrolase</keyword>
<keyword id="KW-0479">Metal-binding</keyword>
<keyword id="KW-0482">Metalloprotease</keyword>
<keyword id="KW-0645">Protease</keyword>
<keyword id="KW-1185">Reference proteome</keyword>
<keyword id="KW-0964">Secreted</keyword>
<keyword id="KW-0732">Signal</keyword>
<keyword id="KW-0862">Zinc</keyword>